<keyword id="KW-0004">4Fe-4S</keyword>
<keyword id="KW-0408">Iron</keyword>
<keyword id="KW-0411">Iron-sulfur</keyword>
<keyword id="KW-0414">Isoprene biosynthesis</keyword>
<keyword id="KW-0479">Metal-binding</keyword>
<keyword id="KW-0560">Oxidoreductase</keyword>
<evidence type="ECO:0000255" key="1">
    <source>
        <dbReference type="HAMAP-Rule" id="MF_00191"/>
    </source>
</evidence>
<accession>B4T6H5</accession>
<reference key="1">
    <citation type="journal article" date="2011" name="J. Bacteriol.">
        <title>Comparative genomics of 28 Salmonella enterica isolates: evidence for CRISPR-mediated adaptive sublineage evolution.</title>
        <authorList>
            <person name="Fricke W.F."/>
            <person name="Mammel M.K."/>
            <person name="McDermott P.F."/>
            <person name="Tartera C."/>
            <person name="White D.G."/>
            <person name="Leclerc J.E."/>
            <person name="Ravel J."/>
            <person name="Cebula T.A."/>
        </authorList>
    </citation>
    <scope>NUCLEOTIDE SEQUENCE [LARGE SCALE GENOMIC DNA]</scope>
    <source>
        <strain>SL254</strain>
    </source>
</reference>
<gene>
    <name evidence="1" type="primary">ispH</name>
    <name type="ordered locus">SNSL254_A0053</name>
</gene>
<name>ISPH_SALNS</name>
<dbReference type="EC" id="1.17.7.4" evidence="1"/>
<dbReference type="EMBL" id="CP001113">
    <property type="protein sequence ID" value="ACF62654.1"/>
    <property type="molecule type" value="Genomic_DNA"/>
</dbReference>
<dbReference type="RefSeq" id="WP_001166422.1">
    <property type="nucleotide sequence ID" value="NZ_CCMR01000003.1"/>
</dbReference>
<dbReference type="SMR" id="B4T6H5"/>
<dbReference type="KEGG" id="see:SNSL254_A0053"/>
<dbReference type="HOGENOM" id="CLU_027486_1_0_6"/>
<dbReference type="UniPathway" id="UPA00056">
    <property type="reaction ID" value="UER00097"/>
</dbReference>
<dbReference type="UniPathway" id="UPA00059">
    <property type="reaction ID" value="UER00105"/>
</dbReference>
<dbReference type="Proteomes" id="UP000008824">
    <property type="component" value="Chromosome"/>
</dbReference>
<dbReference type="GO" id="GO:0051539">
    <property type="term" value="F:4 iron, 4 sulfur cluster binding"/>
    <property type="evidence" value="ECO:0007669"/>
    <property type="project" value="UniProtKB-UniRule"/>
</dbReference>
<dbReference type="GO" id="GO:0051745">
    <property type="term" value="F:4-hydroxy-3-methylbut-2-enyl diphosphate reductase activity"/>
    <property type="evidence" value="ECO:0007669"/>
    <property type="project" value="UniProtKB-UniRule"/>
</dbReference>
<dbReference type="GO" id="GO:0046872">
    <property type="term" value="F:metal ion binding"/>
    <property type="evidence" value="ECO:0007669"/>
    <property type="project" value="UniProtKB-KW"/>
</dbReference>
<dbReference type="GO" id="GO:0050992">
    <property type="term" value="P:dimethylallyl diphosphate biosynthetic process"/>
    <property type="evidence" value="ECO:0007669"/>
    <property type="project" value="UniProtKB-UniRule"/>
</dbReference>
<dbReference type="GO" id="GO:0019288">
    <property type="term" value="P:isopentenyl diphosphate biosynthetic process, methylerythritol 4-phosphate pathway"/>
    <property type="evidence" value="ECO:0007669"/>
    <property type="project" value="UniProtKB-UniRule"/>
</dbReference>
<dbReference type="GO" id="GO:0016114">
    <property type="term" value="P:terpenoid biosynthetic process"/>
    <property type="evidence" value="ECO:0007669"/>
    <property type="project" value="UniProtKB-UniRule"/>
</dbReference>
<dbReference type="CDD" id="cd13944">
    <property type="entry name" value="lytB_ispH"/>
    <property type="match status" value="1"/>
</dbReference>
<dbReference type="FunFam" id="3.40.1010.20:FF:000001">
    <property type="entry name" value="4-hydroxy-3-methylbut-2-enyl diphosphate reductase"/>
    <property type="match status" value="1"/>
</dbReference>
<dbReference type="FunFam" id="3.40.50.11270:FF:000001">
    <property type="entry name" value="4-hydroxy-3-methylbut-2-enyl diphosphate reductase"/>
    <property type="match status" value="1"/>
</dbReference>
<dbReference type="Gene3D" id="3.40.50.11270">
    <property type="match status" value="1"/>
</dbReference>
<dbReference type="Gene3D" id="3.40.1010.20">
    <property type="entry name" value="4-hydroxy-3-methylbut-2-enyl diphosphate reductase, catalytic domain"/>
    <property type="match status" value="2"/>
</dbReference>
<dbReference type="HAMAP" id="MF_00191">
    <property type="entry name" value="IspH"/>
    <property type="match status" value="1"/>
</dbReference>
<dbReference type="InterPro" id="IPR003451">
    <property type="entry name" value="LytB/IspH"/>
</dbReference>
<dbReference type="NCBIfam" id="TIGR00216">
    <property type="entry name" value="ispH_lytB"/>
    <property type="match status" value="1"/>
</dbReference>
<dbReference type="NCBIfam" id="NF002188">
    <property type="entry name" value="PRK01045.1-2"/>
    <property type="match status" value="1"/>
</dbReference>
<dbReference type="NCBIfam" id="NF002190">
    <property type="entry name" value="PRK01045.1-4"/>
    <property type="match status" value="1"/>
</dbReference>
<dbReference type="PANTHER" id="PTHR30426">
    <property type="entry name" value="4-HYDROXY-3-METHYLBUT-2-ENYL DIPHOSPHATE REDUCTASE"/>
    <property type="match status" value="1"/>
</dbReference>
<dbReference type="PANTHER" id="PTHR30426:SF0">
    <property type="entry name" value="4-HYDROXY-3-METHYLBUT-2-ENYL DIPHOSPHATE REDUCTASE"/>
    <property type="match status" value="1"/>
</dbReference>
<dbReference type="Pfam" id="PF02401">
    <property type="entry name" value="LYTB"/>
    <property type="match status" value="1"/>
</dbReference>
<comment type="function">
    <text evidence="1">Catalyzes the conversion of 1-hydroxy-2-methyl-2-(E)-butenyl 4-diphosphate (HMBPP) into a mixture of isopentenyl diphosphate (IPP) and dimethylallyl diphosphate (DMAPP). Acts in the terminal step of the DOXP/MEP pathway for isoprenoid precursor biosynthesis.</text>
</comment>
<comment type="catalytic activity">
    <reaction evidence="1">
        <text>isopentenyl diphosphate + 2 oxidized [2Fe-2S]-[ferredoxin] + H2O = (2E)-4-hydroxy-3-methylbut-2-enyl diphosphate + 2 reduced [2Fe-2S]-[ferredoxin] + 2 H(+)</text>
        <dbReference type="Rhea" id="RHEA:24488"/>
        <dbReference type="Rhea" id="RHEA-COMP:10000"/>
        <dbReference type="Rhea" id="RHEA-COMP:10001"/>
        <dbReference type="ChEBI" id="CHEBI:15377"/>
        <dbReference type="ChEBI" id="CHEBI:15378"/>
        <dbReference type="ChEBI" id="CHEBI:33737"/>
        <dbReference type="ChEBI" id="CHEBI:33738"/>
        <dbReference type="ChEBI" id="CHEBI:128753"/>
        <dbReference type="ChEBI" id="CHEBI:128769"/>
        <dbReference type="EC" id="1.17.7.4"/>
    </reaction>
</comment>
<comment type="catalytic activity">
    <reaction evidence="1">
        <text>dimethylallyl diphosphate + 2 oxidized [2Fe-2S]-[ferredoxin] + H2O = (2E)-4-hydroxy-3-methylbut-2-enyl diphosphate + 2 reduced [2Fe-2S]-[ferredoxin] + 2 H(+)</text>
        <dbReference type="Rhea" id="RHEA:24825"/>
        <dbReference type="Rhea" id="RHEA-COMP:10000"/>
        <dbReference type="Rhea" id="RHEA-COMP:10001"/>
        <dbReference type="ChEBI" id="CHEBI:15377"/>
        <dbReference type="ChEBI" id="CHEBI:15378"/>
        <dbReference type="ChEBI" id="CHEBI:33737"/>
        <dbReference type="ChEBI" id="CHEBI:33738"/>
        <dbReference type="ChEBI" id="CHEBI:57623"/>
        <dbReference type="ChEBI" id="CHEBI:128753"/>
        <dbReference type="EC" id="1.17.7.4"/>
    </reaction>
</comment>
<comment type="cofactor">
    <cofactor evidence="1">
        <name>[4Fe-4S] cluster</name>
        <dbReference type="ChEBI" id="CHEBI:49883"/>
    </cofactor>
    <text evidence="1">Binds 1 [4Fe-4S] cluster per subunit.</text>
</comment>
<comment type="pathway">
    <text evidence="1">Isoprenoid biosynthesis; dimethylallyl diphosphate biosynthesis; dimethylallyl diphosphate from (2E)-4-hydroxy-3-methylbutenyl diphosphate: step 1/1.</text>
</comment>
<comment type="pathway">
    <text evidence="1">Isoprenoid biosynthesis; isopentenyl diphosphate biosynthesis via DXP pathway; isopentenyl diphosphate from 1-deoxy-D-xylulose 5-phosphate: step 6/6.</text>
</comment>
<comment type="subunit">
    <text evidence="1">Homodimer.</text>
</comment>
<comment type="similarity">
    <text evidence="1">Belongs to the IspH family.</text>
</comment>
<protein>
    <recommendedName>
        <fullName evidence="1">4-hydroxy-3-methylbut-2-enyl diphosphate reductase</fullName>
        <shortName evidence="1">HMBPP reductase</shortName>
        <ecNumber evidence="1">1.17.7.4</ecNumber>
    </recommendedName>
</protein>
<sequence>MQILLANPRGFCAGVDRAISIVENALAIYGAPIYVRHEVVHNRYVVDSLRKRGAIFIEQISEVPDGAILIFSAHGVSQAVRNEAKSRDLTVFDATCPLVTKVHMEVARASRRGEESILIGHAGHPEVEGTMGQYSNPEGGMYLVESPEDVWTLNVKNEGKLSFMTQTTLSVDDTSDVIDALRKRFPKIVGPRKDDICYATTNRQEAVRALAEQADVVLVVGSKNSSNSNRLAELAQRMGRTAFLIDDAADIQEAWVKEAACVGVTAGASAPDILVQNVIARLREFGGGEAVTLEGREENIVFEVPKELRVDVREVE</sequence>
<feature type="chain" id="PRO_1000098974" description="4-hydroxy-3-methylbut-2-enyl diphosphate reductase">
    <location>
        <begin position="1"/>
        <end position="316"/>
    </location>
</feature>
<feature type="active site" description="Proton donor" evidence="1">
    <location>
        <position position="126"/>
    </location>
</feature>
<feature type="binding site" evidence="1">
    <location>
        <position position="12"/>
    </location>
    <ligand>
        <name>[4Fe-4S] cluster</name>
        <dbReference type="ChEBI" id="CHEBI:49883"/>
    </ligand>
</feature>
<feature type="binding site" evidence="1">
    <location>
        <position position="41"/>
    </location>
    <ligand>
        <name>(2E)-4-hydroxy-3-methylbut-2-enyl diphosphate</name>
        <dbReference type="ChEBI" id="CHEBI:128753"/>
    </ligand>
</feature>
<feature type="binding site" evidence="1">
    <location>
        <position position="41"/>
    </location>
    <ligand>
        <name>dimethylallyl diphosphate</name>
        <dbReference type="ChEBI" id="CHEBI:57623"/>
    </ligand>
</feature>
<feature type="binding site" evidence="1">
    <location>
        <position position="41"/>
    </location>
    <ligand>
        <name>isopentenyl diphosphate</name>
        <dbReference type="ChEBI" id="CHEBI:128769"/>
    </ligand>
</feature>
<feature type="binding site" evidence="1">
    <location>
        <position position="74"/>
    </location>
    <ligand>
        <name>(2E)-4-hydroxy-3-methylbut-2-enyl diphosphate</name>
        <dbReference type="ChEBI" id="CHEBI:128753"/>
    </ligand>
</feature>
<feature type="binding site" evidence="1">
    <location>
        <position position="74"/>
    </location>
    <ligand>
        <name>dimethylallyl diphosphate</name>
        <dbReference type="ChEBI" id="CHEBI:57623"/>
    </ligand>
</feature>
<feature type="binding site" evidence="1">
    <location>
        <position position="74"/>
    </location>
    <ligand>
        <name>isopentenyl diphosphate</name>
        <dbReference type="ChEBI" id="CHEBI:128769"/>
    </ligand>
</feature>
<feature type="binding site" evidence="1">
    <location>
        <position position="96"/>
    </location>
    <ligand>
        <name>[4Fe-4S] cluster</name>
        <dbReference type="ChEBI" id="CHEBI:49883"/>
    </ligand>
</feature>
<feature type="binding site" evidence="1">
    <location>
        <position position="124"/>
    </location>
    <ligand>
        <name>(2E)-4-hydroxy-3-methylbut-2-enyl diphosphate</name>
        <dbReference type="ChEBI" id="CHEBI:128753"/>
    </ligand>
</feature>
<feature type="binding site" evidence="1">
    <location>
        <position position="124"/>
    </location>
    <ligand>
        <name>dimethylallyl diphosphate</name>
        <dbReference type="ChEBI" id="CHEBI:57623"/>
    </ligand>
</feature>
<feature type="binding site" evidence="1">
    <location>
        <position position="124"/>
    </location>
    <ligand>
        <name>isopentenyl diphosphate</name>
        <dbReference type="ChEBI" id="CHEBI:128769"/>
    </ligand>
</feature>
<feature type="binding site" evidence="1">
    <location>
        <position position="167"/>
    </location>
    <ligand>
        <name>(2E)-4-hydroxy-3-methylbut-2-enyl diphosphate</name>
        <dbReference type="ChEBI" id="CHEBI:128753"/>
    </ligand>
</feature>
<feature type="binding site" evidence="1">
    <location>
        <position position="197"/>
    </location>
    <ligand>
        <name>[4Fe-4S] cluster</name>
        <dbReference type="ChEBI" id="CHEBI:49883"/>
    </ligand>
</feature>
<feature type="binding site" evidence="1">
    <location>
        <position position="225"/>
    </location>
    <ligand>
        <name>(2E)-4-hydroxy-3-methylbut-2-enyl diphosphate</name>
        <dbReference type="ChEBI" id="CHEBI:128753"/>
    </ligand>
</feature>
<feature type="binding site" evidence="1">
    <location>
        <position position="225"/>
    </location>
    <ligand>
        <name>dimethylallyl diphosphate</name>
        <dbReference type="ChEBI" id="CHEBI:57623"/>
    </ligand>
</feature>
<feature type="binding site" evidence="1">
    <location>
        <position position="225"/>
    </location>
    <ligand>
        <name>isopentenyl diphosphate</name>
        <dbReference type="ChEBI" id="CHEBI:128769"/>
    </ligand>
</feature>
<feature type="binding site" evidence="1">
    <location>
        <position position="226"/>
    </location>
    <ligand>
        <name>(2E)-4-hydroxy-3-methylbut-2-enyl diphosphate</name>
        <dbReference type="ChEBI" id="CHEBI:128753"/>
    </ligand>
</feature>
<feature type="binding site" evidence="1">
    <location>
        <position position="226"/>
    </location>
    <ligand>
        <name>dimethylallyl diphosphate</name>
        <dbReference type="ChEBI" id="CHEBI:57623"/>
    </ligand>
</feature>
<feature type="binding site" evidence="1">
    <location>
        <position position="226"/>
    </location>
    <ligand>
        <name>isopentenyl diphosphate</name>
        <dbReference type="ChEBI" id="CHEBI:128769"/>
    </ligand>
</feature>
<feature type="binding site" evidence="1">
    <location>
        <position position="227"/>
    </location>
    <ligand>
        <name>(2E)-4-hydroxy-3-methylbut-2-enyl diphosphate</name>
        <dbReference type="ChEBI" id="CHEBI:128753"/>
    </ligand>
</feature>
<feature type="binding site" evidence="1">
    <location>
        <position position="227"/>
    </location>
    <ligand>
        <name>dimethylallyl diphosphate</name>
        <dbReference type="ChEBI" id="CHEBI:57623"/>
    </ligand>
</feature>
<feature type="binding site" evidence="1">
    <location>
        <position position="227"/>
    </location>
    <ligand>
        <name>isopentenyl diphosphate</name>
        <dbReference type="ChEBI" id="CHEBI:128769"/>
    </ligand>
</feature>
<feature type="binding site" evidence="1">
    <location>
        <position position="269"/>
    </location>
    <ligand>
        <name>(2E)-4-hydroxy-3-methylbut-2-enyl diphosphate</name>
        <dbReference type="ChEBI" id="CHEBI:128753"/>
    </ligand>
</feature>
<feature type="binding site" evidence="1">
    <location>
        <position position="269"/>
    </location>
    <ligand>
        <name>dimethylallyl diphosphate</name>
        <dbReference type="ChEBI" id="CHEBI:57623"/>
    </ligand>
</feature>
<feature type="binding site" evidence="1">
    <location>
        <position position="269"/>
    </location>
    <ligand>
        <name>isopentenyl diphosphate</name>
        <dbReference type="ChEBI" id="CHEBI:128769"/>
    </ligand>
</feature>
<proteinExistence type="inferred from homology"/>
<organism>
    <name type="scientific">Salmonella newport (strain SL254)</name>
    <dbReference type="NCBI Taxonomy" id="423368"/>
    <lineage>
        <taxon>Bacteria</taxon>
        <taxon>Pseudomonadati</taxon>
        <taxon>Pseudomonadota</taxon>
        <taxon>Gammaproteobacteria</taxon>
        <taxon>Enterobacterales</taxon>
        <taxon>Enterobacteriaceae</taxon>
        <taxon>Salmonella</taxon>
    </lineage>
</organism>